<accession>C3KWF0</accession>
<reference key="1">
    <citation type="submission" date="2008-05" db="EMBL/GenBank/DDBJ databases">
        <title>Genome sequence of Clostridium botulinum Ba4 strain 657.</title>
        <authorList>
            <person name="Shrivastava S."/>
            <person name="Brown J.L."/>
            <person name="Bruce D."/>
            <person name="Detter C."/>
            <person name="Munk C."/>
            <person name="Smith L.A."/>
            <person name="Smith T.J."/>
            <person name="Sutton G."/>
            <person name="Brettin T.S."/>
        </authorList>
    </citation>
    <scope>NUCLEOTIDE SEQUENCE [LARGE SCALE GENOMIC DNA]</scope>
    <source>
        <strain>657 / Type Ba4</strain>
    </source>
</reference>
<dbReference type="EC" id="4.2.1.59" evidence="1"/>
<dbReference type="EMBL" id="CP001083">
    <property type="protein sequence ID" value="ACQ53643.1"/>
    <property type="molecule type" value="Genomic_DNA"/>
</dbReference>
<dbReference type="RefSeq" id="WP_003359347.1">
    <property type="nucleotide sequence ID" value="NC_012658.1"/>
</dbReference>
<dbReference type="SMR" id="C3KWF0"/>
<dbReference type="KEGG" id="cbi:CLJ_B3926"/>
<dbReference type="HOGENOM" id="CLU_078912_3_0_9"/>
<dbReference type="Proteomes" id="UP000002333">
    <property type="component" value="Chromosome"/>
</dbReference>
<dbReference type="GO" id="GO:0005737">
    <property type="term" value="C:cytoplasm"/>
    <property type="evidence" value="ECO:0007669"/>
    <property type="project" value="UniProtKB-SubCell"/>
</dbReference>
<dbReference type="GO" id="GO:0016020">
    <property type="term" value="C:membrane"/>
    <property type="evidence" value="ECO:0007669"/>
    <property type="project" value="GOC"/>
</dbReference>
<dbReference type="GO" id="GO:0019171">
    <property type="term" value="F:(3R)-hydroxyacyl-[acyl-carrier-protein] dehydratase activity"/>
    <property type="evidence" value="ECO:0007669"/>
    <property type="project" value="UniProtKB-EC"/>
</dbReference>
<dbReference type="GO" id="GO:0006633">
    <property type="term" value="P:fatty acid biosynthetic process"/>
    <property type="evidence" value="ECO:0007669"/>
    <property type="project" value="UniProtKB-UniRule"/>
</dbReference>
<dbReference type="GO" id="GO:0009245">
    <property type="term" value="P:lipid A biosynthetic process"/>
    <property type="evidence" value="ECO:0007669"/>
    <property type="project" value="UniProtKB-UniRule"/>
</dbReference>
<dbReference type="CDD" id="cd01288">
    <property type="entry name" value="FabZ"/>
    <property type="match status" value="1"/>
</dbReference>
<dbReference type="FunFam" id="3.10.129.10:FF:000001">
    <property type="entry name" value="3-hydroxyacyl-[acyl-carrier-protein] dehydratase FabZ"/>
    <property type="match status" value="1"/>
</dbReference>
<dbReference type="Gene3D" id="3.10.129.10">
    <property type="entry name" value="Hotdog Thioesterase"/>
    <property type="match status" value="1"/>
</dbReference>
<dbReference type="HAMAP" id="MF_00406">
    <property type="entry name" value="FabZ"/>
    <property type="match status" value="1"/>
</dbReference>
<dbReference type="InterPro" id="IPR013114">
    <property type="entry name" value="FabA_FabZ"/>
</dbReference>
<dbReference type="InterPro" id="IPR010084">
    <property type="entry name" value="FabZ"/>
</dbReference>
<dbReference type="InterPro" id="IPR029069">
    <property type="entry name" value="HotDog_dom_sf"/>
</dbReference>
<dbReference type="NCBIfam" id="TIGR01750">
    <property type="entry name" value="fabZ"/>
    <property type="match status" value="1"/>
</dbReference>
<dbReference type="NCBIfam" id="NF000582">
    <property type="entry name" value="PRK00006.1"/>
    <property type="match status" value="1"/>
</dbReference>
<dbReference type="PANTHER" id="PTHR30272">
    <property type="entry name" value="3-HYDROXYACYL-[ACYL-CARRIER-PROTEIN] DEHYDRATASE"/>
    <property type="match status" value="1"/>
</dbReference>
<dbReference type="PANTHER" id="PTHR30272:SF1">
    <property type="entry name" value="3-HYDROXYACYL-[ACYL-CARRIER-PROTEIN] DEHYDRATASE"/>
    <property type="match status" value="1"/>
</dbReference>
<dbReference type="Pfam" id="PF07977">
    <property type="entry name" value="FabA"/>
    <property type="match status" value="1"/>
</dbReference>
<dbReference type="SUPFAM" id="SSF54637">
    <property type="entry name" value="Thioesterase/thiol ester dehydrase-isomerase"/>
    <property type="match status" value="1"/>
</dbReference>
<sequence>MEKFLDINEIKKIIPHRYPFLLVDKITELEEGKSAVGYKNVTANEYFFNGHFPEEPVMPGVLIIEALAQVGAVAILSKEEFKGKIAYFGGINKAKFRKKVVPGDVLRLSIELTKIKGVAGVGKAVATVDGKVAAEAELLFVIGK</sequence>
<name>FABZ_CLOB6</name>
<protein>
    <recommendedName>
        <fullName evidence="1">3-hydroxyacyl-[acyl-carrier-protein] dehydratase FabZ</fullName>
        <ecNumber evidence="1">4.2.1.59</ecNumber>
    </recommendedName>
    <alternativeName>
        <fullName evidence="1">(3R)-hydroxymyristoyl-[acyl-carrier-protein] dehydratase</fullName>
        <shortName evidence="1">(3R)-hydroxymyristoyl-ACP dehydrase</shortName>
    </alternativeName>
    <alternativeName>
        <fullName evidence="1">Beta-hydroxyacyl-ACP dehydratase</fullName>
    </alternativeName>
</protein>
<keyword id="KW-0963">Cytoplasm</keyword>
<keyword id="KW-0441">Lipid A biosynthesis</keyword>
<keyword id="KW-0444">Lipid biosynthesis</keyword>
<keyword id="KW-0443">Lipid metabolism</keyword>
<keyword id="KW-0456">Lyase</keyword>
<organism>
    <name type="scientific">Clostridium botulinum (strain 657 / Type Ba4)</name>
    <dbReference type="NCBI Taxonomy" id="515621"/>
    <lineage>
        <taxon>Bacteria</taxon>
        <taxon>Bacillati</taxon>
        <taxon>Bacillota</taxon>
        <taxon>Clostridia</taxon>
        <taxon>Eubacteriales</taxon>
        <taxon>Clostridiaceae</taxon>
        <taxon>Clostridium</taxon>
    </lineage>
</organism>
<evidence type="ECO:0000255" key="1">
    <source>
        <dbReference type="HAMAP-Rule" id="MF_00406"/>
    </source>
</evidence>
<proteinExistence type="inferred from homology"/>
<feature type="chain" id="PRO_1000205939" description="3-hydroxyacyl-[acyl-carrier-protein] dehydratase FabZ">
    <location>
        <begin position="1"/>
        <end position="144"/>
    </location>
</feature>
<feature type="active site" evidence="1">
    <location>
        <position position="51"/>
    </location>
</feature>
<gene>
    <name evidence="1" type="primary">fabZ</name>
    <name type="ordered locus">CLJ_B3926</name>
</gene>
<comment type="function">
    <text evidence="1">Involved in unsaturated fatty acids biosynthesis. Catalyzes the dehydration of short chain beta-hydroxyacyl-ACPs and long chain saturated and unsaturated beta-hydroxyacyl-ACPs.</text>
</comment>
<comment type="catalytic activity">
    <reaction evidence="1">
        <text>a (3R)-hydroxyacyl-[ACP] = a (2E)-enoyl-[ACP] + H2O</text>
        <dbReference type="Rhea" id="RHEA:13097"/>
        <dbReference type="Rhea" id="RHEA-COMP:9925"/>
        <dbReference type="Rhea" id="RHEA-COMP:9945"/>
        <dbReference type="ChEBI" id="CHEBI:15377"/>
        <dbReference type="ChEBI" id="CHEBI:78784"/>
        <dbReference type="ChEBI" id="CHEBI:78827"/>
        <dbReference type="EC" id="4.2.1.59"/>
    </reaction>
</comment>
<comment type="subcellular location">
    <subcellularLocation>
        <location evidence="1">Cytoplasm</location>
    </subcellularLocation>
</comment>
<comment type="similarity">
    <text evidence="1">Belongs to the thioester dehydratase family. FabZ subfamily.</text>
</comment>